<reference key="1">
    <citation type="journal article" date="2004" name="Proc. Natl. Acad. Sci. U.S.A.">
        <title>The diploid genome sequence of Candida albicans.</title>
        <authorList>
            <person name="Jones T."/>
            <person name="Federspiel N.A."/>
            <person name="Chibana H."/>
            <person name="Dungan J."/>
            <person name="Kalman S."/>
            <person name="Magee B.B."/>
            <person name="Newport G."/>
            <person name="Thorstenson Y.R."/>
            <person name="Agabian N."/>
            <person name="Magee P.T."/>
            <person name="Davis R.W."/>
            <person name="Scherer S."/>
        </authorList>
    </citation>
    <scope>NUCLEOTIDE SEQUENCE [LARGE SCALE GENOMIC DNA]</scope>
    <source>
        <strain>SC5314 / ATCC MYA-2876</strain>
    </source>
</reference>
<reference key="2">
    <citation type="journal article" date="2007" name="Genome Biol.">
        <title>Assembly of the Candida albicans genome into sixteen supercontigs aligned on the eight chromosomes.</title>
        <authorList>
            <person name="van het Hoog M."/>
            <person name="Rast T.J."/>
            <person name="Martchenko M."/>
            <person name="Grindle S."/>
            <person name="Dignard D."/>
            <person name="Hogues H."/>
            <person name="Cuomo C."/>
            <person name="Berriman M."/>
            <person name="Scherer S."/>
            <person name="Magee B.B."/>
            <person name="Whiteway M."/>
            <person name="Chibana H."/>
            <person name="Nantel A."/>
            <person name="Magee P.T."/>
        </authorList>
    </citation>
    <scope>GENOME REANNOTATION</scope>
    <source>
        <strain>SC5314 / ATCC MYA-2876</strain>
    </source>
</reference>
<reference key="3">
    <citation type="journal article" date="2013" name="Genome Biol.">
        <title>Assembly of a phased diploid Candida albicans genome facilitates allele-specific measurements and provides a simple model for repeat and indel structure.</title>
        <authorList>
            <person name="Muzzey D."/>
            <person name="Schwartz K."/>
            <person name="Weissman J.S."/>
            <person name="Sherlock G."/>
        </authorList>
    </citation>
    <scope>NUCLEOTIDE SEQUENCE [LARGE SCALE GENOMIC DNA]</scope>
    <scope>GENOME REANNOTATION</scope>
    <source>
        <strain>SC5314 / ATCC MYA-2876</strain>
    </source>
</reference>
<protein>
    <recommendedName>
        <fullName evidence="1">Eukaryotic translation initiation factor 3 subunit I</fullName>
        <shortName evidence="1">eIF3i</shortName>
    </recommendedName>
    <alternativeName>
        <fullName evidence="1">Eukaryotic translation initiation factor 3 39 kDa subunit homolog</fullName>
        <shortName evidence="1">eIF-3 39 kDa subunit homolog</shortName>
    </alternativeName>
</protein>
<evidence type="ECO:0000255" key="1">
    <source>
        <dbReference type="HAMAP-Rule" id="MF_03008"/>
    </source>
</evidence>
<feature type="chain" id="PRO_0000365361" description="Eukaryotic translation initiation factor 3 subunit I">
    <location>
        <begin position="1"/>
        <end position="350"/>
    </location>
</feature>
<feature type="repeat" description="WD 1">
    <location>
        <begin position="8"/>
        <end position="49"/>
    </location>
</feature>
<feature type="repeat" description="WD 2">
    <location>
        <begin position="51"/>
        <end position="89"/>
    </location>
</feature>
<feature type="repeat" description="WD 3">
    <location>
        <begin position="91"/>
        <end position="135"/>
    </location>
</feature>
<feature type="repeat" description="WD 4">
    <location>
        <begin position="149"/>
        <end position="188"/>
    </location>
</feature>
<feature type="repeat" description="WD 5">
    <location>
        <begin position="198"/>
        <end position="240"/>
    </location>
</feature>
<feature type="repeat" description="WD 6">
    <location>
        <begin position="296"/>
        <end position="335"/>
    </location>
</feature>
<sequence>MRPIKLMGHERSLTQVKYNREGDLLFSVAKDNAASIWYSSNGERLGTLEGHQGVIWSIDVDPETHLCATGGGDLAIKLWKVENGQCVYTWDSPSPVRRVAFSPDGKKLLAIADQVMGHIGTVSVFDINDDDATLSQQKAEPSLVIETKSEGSKATVAGWSGDGDYIIVGHDNGYVSKYDSKTGKLVTSLQAHGIHNEEKNVSITDIQFAPEDRSYFITSSKDKTATLIDVDTFEILKVYKADAPMNTAAITPVKDFVILGGGQEARNVTTTAESQGKFEARFYHKIFEEEIGRVKGHFGPLNTVAVHPDGTGYSSGGEDGFIRVHTFDKSYQDFLFDAERTERAAAAGTI</sequence>
<name>EIF3I_CANAL</name>
<proteinExistence type="inferred from homology"/>
<organism>
    <name type="scientific">Candida albicans (strain SC5314 / ATCC MYA-2876)</name>
    <name type="common">Yeast</name>
    <dbReference type="NCBI Taxonomy" id="237561"/>
    <lineage>
        <taxon>Eukaryota</taxon>
        <taxon>Fungi</taxon>
        <taxon>Dikarya</taxon>
        <taxon>Ascomycota</taxon>
        <taxon>Saccharomycotina</taxon>
        <taxon>Pichiomycetes</taxon>
        <taxon>Debaryomycetaceae</taxon>
        <taxon>Candida/Lodderomyces clade</taxon>
        <taxon>Candida</taxon>
    </lineage>
</organism>
<accession>Q5AI86</accession>
<accession>A0A1D8PCU7</accession>
<dbReference type="EMBL" id="CP017623">
    <property type="protein sequence ID" value="AOW25960.1"/>
    <property type="molecule type" value="Genomic_DNA"/>
</dbReference>
<dbReference type="RefSeq" id="XP_721466.1">
    <property type="nucleotide sequence ID" value="XM_716373.1"/>
</dbReference>
<dbReference type="SMR" id="Q5AI86"/>
<dbReference type="FunCoup" id="Q5AI86">
    <property type="interactions" value="1161"/>
</dbReference>
<dbReference type="STRING" id="237561.Q5AI86"/>
<dbReference type="EnsemblFungi" id="C1_02790W_A-T">
    <property type="protein sequence ID" value="C1_02790W_A-T-p1"/>
    <property type="gene ID" value="C1_02790W_A"/>
</dbReference>
<dbReference type="GeneID" id="3636872"/>
<dbReference type="KEGG" id="cal:CAALFM_C102790WA"/>
<dbReference type="CGD" id="CAL0000192484">
    <property type="gene designation" value="TIF34"/>
</dbReference>
<dbReference type="VEuPathDB" id="FungiDB:C1_02790W_A"/>
<dbReference type="eggNOG" id="KOG0643">
    <property type="taxonomic scope" value="Eukaryota"/>
</dbReference>
<dbReference type="HOGENOM" id="CLU_043845_0_1_1"/>
<dbReference type="InParanoid" id="Q5AI86"/>
<dbReference type="OMA" id="VWFSHNG"/>
<dbReference type="OrthoDB" id="24966at2759"/>
<dbReference type="PRO" id="PR:Q5AI86"/>
<dbReference type="Proteomes" id="UP000000559">
    <property type="component" value="Chromosome 1"/>
</dbReference>
<dbReference type="GO" id="GO:0016282">
    <property type="term" value="C:eukaryotic 43S preinitiation complex"/>
    <property type="evidence" value="ECO:0007669"/>
    <property type="project" value="UniProtKB-UniRule"/>
</dbReference>
<dbReference type="GO" id="GO:0033290">
    <property type="term" value="C:eukaryotic 48S preinitiation complex"/>
    <property type="evidence" value="ECO:0007669"/>
    <property type="project" value="UniProtKB-UniRule"/>
</dbReference>
<dbReference type="GO" id="GO:0071540">
    <property type="term" value="C:eukaryotic translation initiation factor 3 complex, eIF3e"/>
    <property type="evidence" value="ECO:0007669"/>
    <property type="project" value="EnsemblFungi"/>
</dbReference>
<dbReference type="GO" id="GO:0071541">
    <property type="term" value="C:eukaryotic translation initiation factor 3 complex, eIF3m"/>
    <property type="evidence" value="ECO:0000318"/>
    <property type="project" value="GO_Central"/>
</dbReference>
<dbReference type="GO" id="GO:0034399">
    <property type="term" value="C:nuclear periphery"/>
    <property type="evidence" value="ECO:0007669"/>
    <property type="project" value="EnsemblFungi"/>
</dbReference>
<dbReference type="GO" id="GO:0003723">
    <property type="term" value="F:RNA binding"/>
    <property type="evidence" value="ECO:0000318"/>
    <property type="project" value="GO_Central"/>
</dbReference>
<dbReference type="GO" id="GO:0003743">
    <property type="term" value="F:translation initiation factor activity"/>
    <property type="evidence" value="ECO:0000318"/>
    <property type="project" value="GO_Central"/>
</dbReference>
<dbReference type="GO" id="GO:0002183">
    <property type="term" value="P:cytoplasmic translational initiation"/>
    <property type="evidence" value="ECO:0000318"/>
    <property type="project" value="GO_Central"/>
</dbReference>
<dbReference type="GO" id="GO:0001732">
    <property type="term" value="P:formation of cytoplasmic translation initiation complex"/>
    <property type="evidence" value="ECO:0007669"/>
    <property type="project" value="UniProtKB-UniRule"/>
</dbReference>
<dbReference type="FunFam" id="2.130.10.10:FF:000127">
    <property type="entry name" value="Eukaryotic translation initiation factor 3 subunit I"/>
    <property type="match status" value="1"/>
</dbReference>
<dbReference type="Gene3D" id="2.130.10.10">
    <property type="entry name" value="YVTN repeat-like/Quinoprotein amine dehydrogenase"/>
    <property type="match status" value="1"/>
</dbReference>
<dbReference type="HAMAP" id="MF_03008">
    <property type="entry name" value="eIF3i"/>
    <property type="match status" value="1"/>
</dbReference>
<dbReference type="InterPro" id="IPR027525">
    <property type="entry name" value="eIF3i"/>
</dbReference>
<dbReference type="InterPro" id="IPR015943">
    <property type="entry name" value="WD40/YVTN_repeat-like_dom_sf"/>
</dbReference>
<dbReference type="InterPro" id="IPR036322">
    <property type="entry name" value="WD40_repeat_dom_sf"/>
</dbReference>
<dbReference type="InterPro" id="IPR001680">
    <property type="entry name" value="WD40_rpt"/>
</dbReference>
<dbReference type="PANTHER" id="PTHR19877">
    <property type="entry name" value="EUKARYOTIC TRANSLATION INITIATION FACTOR 3 SUBUNIT I"/>
    <property type="match status" value="1"/>
</dbReference>
<dbReference type="PANTHER" id="PTHR19877:SF1">
    <property type="entry name" value="EUKARYOTIC TRANSLATION INITIATION FACTOR 3 SUBUNIT I"/>
    <property type="match status" value="1"/>
</dbReference>
<dbReference type="Pfam" id="PF24805">
    <property type="entry name" value="EIF3I"/>
    <property type="match status" value="1"/>
</dbReference>
<dbReference type="SMART" id="SM00320">
    <property type="entry name" value="WD40"/>
    <property type="match status" value="6"/>
</dbReference>
<dbReference type="SUPFAM" id="SSF50978">
    <property type="entry name" value="WD40 repeat-like"/>
    <property type="match status" value="1"/>
</dbReference>
<dbReference type="PROSITE" id="PS50082">
    <property type="entry name" value="WD_REPEATS_2"/>
    <property type="match status" value="3"/>
</dbReference>
<dbReference type="PROSITE" id="PS50294">
    <property type="entry name" value="WD_REPEATS_REGION"/>
    <property type="match status" value="1"/>
</dbReference>
<gene>
    <name evidence="1" type="primary">TIF34</name>
    <name type="ordered locus">CAALFM_C102790WA</name>
    <name type="ORF">CaO19.10484</name>
    <name type="ORF">CaO19.2967</name>
</gene>
<comment type="function">
    <text evidence="1">Component of the eukaryotic translation initiation factor 3 (eIF-3) complex, which is involved in protein synthesis of a specialized repertoire of mRNAs and, together with other initiation factors, stimulates binding of mRNA and methionyl-tRNAi to the 40S ribosome. The eIF-3 complex specifically targets and initiates translation of a subset of mRNAs involved in cell proliferation.</text>
</comment>
<comment type="subunit">
    <text evidence="1">Component of the eukaryotic translation initiation factor 3 (eIF-3) complex.</text>
</comment>
<comment type="subcellular location">
    <subcellularLocation>
        <location evidence="1">Cytoplasm</location>
    </subcellularLocation>
</comment>
<comment type="similarity">
    <text evidence="1">Belongs to the eIF-3 subunit I family.</text>
</comment>
<keyword id="KW-0963">Cytoplasm</keyword>
<keyword id="KW-0396">Initiation factor</keyword>
<keyword id="KW-0648">Protein biosynthesis</keyword>
<keyword id="KW-1185">Reference proteome</keyword>
<keyword id="KW-0677">Repeat</keyword>
<keyword id="KW-0853">WD repeat</keyword>